<feature type="chain" id="PRO_0000432282" description="4-hydroxyproline 2-epimerase">
    <location>
        <begin position="1"/>
        <end position="310"/>
    </location>
</feature>
<feature type="active site" description="Proton acceptor" evidence="1">
    <location>
        <position position="88"/>
    </location>
</feature>
<feature type="active site" description="Proton donor" evidence="1">
    <location>
        <position position="236"/>
    </location>
</feature>
<feature type="binding site" evidence="1">
    <location>
        <begin position="89"/>
        <end position="90"/>
    </location>
    <ligand>
        <name>substrate</name>
    </ligand>
</feature>
<feature type="binding site" evidence="1">
    <location>
        <position position="208"/>
    </location>
    <ligand>
        <name>substrate</name>
    </ligand>
</feature>
<feature type="binding site" evidence="1">
    <location>
        <position position="232"/>
    </location>
    <ligand>
        <name>substrate</name>
    </ligand>
</feature>
<feature type="binding site" evidence="1">
    <location>
        <begin position="237"/>
        <end position="238"/>
    </location>
    <ligand>
        <name>substrate</name>
    </ligand>
</feature>
<comment type="function">
    <text evidence="2">Catalyzes the epimerization of trans-4-hydroxy-L-proline (t4LHyp) to cis-4-hydroxy-D-proline (c4DHyp). Is likely involved in a degradation pathway that converts t4LHyp to alpha-ketoglutarate. Displays no proline racemase activity.</text>
</comment>
<comment type="catalytic activity">
    <reaction evidence="2">
        <text>trans-4-hydroxy-L-proline = cis-4-hydroxy-D-proline</text>
        <dbReference type="Rhea" id="RHEA:21152"/>
        <dbReference type="ChEBI" id="CHEBI:57690"/>
        <dbReference type="ChEBI" id="CHEBI:58375"/>
        <dbReference type="EC" id="5.1.1.8"/>
    </reaction>
</comment>
<comment type="similarity">
    <text evidence="4">Belongs to the proline racemase family.</text>
</comment>
<accession>B4EHE6</accession>
<dbReference type="EC" id="5.1.1.8" evidence="2"/>
<dbReference type="EMBL" id="AM747721">
    <property type="protein sequence ID" value="CAR55122.1"/>
    <property type="molecule type" value="Genomic_DNA"/>
</dbReference>
<dbReference type="RefSeq" id="WP_006484864.1">
    <property type="nucleotide sequence ID" value="NC_011001.1"/>
</dbReference>
<dbReference type="SMR" id="B4EHE6"/>
<dbReference type="KEGG" id="bcj:BCAM1267"/>
<dbReference type="eggNOG" id="COG3938">
    <property type="taxonomic scope" value="Bacteria"/>
</dbReference>
<dbReference type="HOGENOM" id="CLU_036729_1_0_4"/>
<dbReference type="BioCyc" id="BCEN216591:G1G1V-5274-MONOMER"/>
<dbReference type="Proteomes" id="UP000001035">
    <property type="component" value="Chromosome 2"/>
</dbReference>
<dbReference type="GO" id="GO:0047580">
    <property type="term" value="F:4-hydroxyproline epimerase activity"/>
    <property type="evidence" value="ECO:0007669"/>
    <property type="project" value="UniProtKB-EC"/>
</dbReference>
<dbReference type="FunFam" id="3.10.310.10:FF:000012">
    <property type="entry name" value="4-hydroxyproline 2-epimerase"/>
    <property type="match status" value="1"/>
</dbReference>
<dbReference type="Gene3D" id="3.10.310.10">
    <property type="entry name" value="Diaminopimelate Epimerase, Chain A, domain 1"/>
    <property type="match status" value="2"/>
</dbReference>
<dbReference type="InterPro" id="IPR008794">
    <property type="entry name" value="Pro_racemase_fam"/>
</dbReference>
<dbReference type="NCBIfam" id="NF010577">
    <property type="entry name" value="PRK13970.1"/>
    <property type="match status" value="1"/>
</dbReference>
<dbReference type="PANTHER" id="PTHR33442">
    <property type="entry name" value="TRANS-3-HYDROXY-L-PROLINE DEHYDRATASE"/>
    <property type="match status" value="1"/>
</dbReference>
<dbReference type="PANTHER" id="PTHR33442:SF1">
    <property type="entry name" value="TRANS-3-HYDROXY-L-PROLINE DEHYDRATASE"/>
    <property type="match status" value="1"/>
</dbReference>
<dbReference type="Pfam" id="PF05544">
    <property type="entry name" value="Pro_racemase"/>
    <property type="match status" value="1"/>
</dbReference>
<dbReference type="PIRSF" id="PIRSF029792">
    <property type="entry name" value="Pro_racemase"/>
    <property type="match status" value="1"/>
</dbReference>
<dbReference type="SFLD" id="SFLDS00028">
    <property type="entry name" value="Proline_Racemase"/>
    <property type="match status" value="1"/>
</dbReference>
<dbReference type="SUPFAM" id="SSF54506">
    <property type="entry name" value="Diaminopimelate epimerase-like"/>
    <property type="match status" value="1"/>
</dbReference>
<protein>
    <recommendedName>
        <fullName evidence="3">4-hydroxyproline 2-epimerase</fullName>
        <shortName>4Hyp 2-epimerase</shortName>
        <shortName evidence="3">4HypE</shortName>
        <ecNumber evidence="2">5.1.1.8</ecNumber>
    </recommendedName>
</protein>
<proteinExistence type="evidence at protein level"/>
<gene>
    <name type="ordered locus">BceJ2315_47180</name>
    <name evidence="5" type="ORF">BCAM1267</name>
</gene>
<reference key="1">
    <citation type="journal article" date="2009" name="J. Bacteriol.">
        <title>The genome of Burkholderia cenocepacia J2315, an epidemic pathogen of cystic fibrosis patients.</title>
        <authorList>
            <person name="Holden M.T."/>
            <person name="Seth-Smith H.M."/>
            <person name="Crossman L.C."/>
            <person name="Sebaihia M."/>
            <person name="Bentley S.D."/>
            <person name="Cerdeno-Tarraga A.M."/>
            <person name="Thomson N.R."/>
            <person name="Bason N."/>
            <person name="Quail M.A."/>
            <person name="Sharp S."/>
            <person name="Cherevach I."/>
            <person name="Churcher C."/>
            <person name="Goodhead I."/>
            <person name="Hauser H."/>
            <person name="Holroyd N."/>
            <person name="Mungall K."/>
            <person name="Scott P."/>
            <person name="Walker D."/>
            <person name="White B."/>
            <person name="Rose H."/>
            <person name="Iversen P."/>
            <person name="Mil-Homens D."/>
            <person name="Rocha E.P."/>
            <person name="Fialho A.M."/>
            <person name="Baldwin A."/>
            <person name="Dowson C."/>
            <person name="Barrell B.G."/>
            <person name="Govan J.R."/>
            <person name="Vandamme P."/>
            <person name="Hart C.A."/>
            <person name="Mahenthiralingam E."/>
            <person name="Parkhill J."/>
        </authorList>
    </citation>
    <scope>NUCLEOTIDE SEQUENCE [LARGE SCALE GENOMIC DNA]</scope>
    <source>
        <strain>ATCC BAA-245 / DSM 16553 / LMG 16656 / NCTC 13227 / J2315 / CF5610</strain>
    </source>
</reference>
<reference key="2">
    <citation type="journal article" date="2014" name="Elife">
        <title>Prediction and characterization of enzymatic activities guided by sequence similarity and genome neighborhood networks.</title>
        <authorList>
            <person name="Zhao S."/>
            <person name="Sakai A."/>
            <person name="Zhang X."/>
            <person name="Vetting M.W."/>
            <person name="Kumar R."/>
            <person name="Hillerich B."/>
            <person name="San Francisco B."/>
            <person name="Solbiati J."/>
            <person name="Steves A."/>
            <person name="Brown S."/>
            <person name="Akiva E."/>
            <person name="Barber A."/>
            <person name="Seidel R.D."/>
            <person name="Babbitt P.C."/>
            <person name="Almo S.C."/>
            <person name="Gerlt J.A."/>
            <person name="Jacobson M.P."/>
        </authorList>
    </citation>
    <scope>FUNCTION</scope>
    <scope>CATALYTIC ACTIVITY</scope>
</reference>
<sequence>MKRIQIIDSHTGGEPTRLVVSGFPSLGDGTMAERRDVLAREHDRYRTACILEPRGSDVLVGALLCDPVAPDAAAGVIFFNNSGYLGMCGHGTIGVVRTLHHMGRIAPGVHRIETPVGTVEATLHDDLSVSVRNVPAYRHAQGVALDVPGYGPVKGDIAWGGNWFFLISDHGQRVAGDNVAALTAYASAVREGLERAGITGANGGEIDHIELFADDPEHDSRSFVLCPGLAYDRSPCGTGTSAKLACLAADGKLAPGAVWRQASVIGSVFHASYERADGGIVPTIRGSAHLSAEATLLIEEDDPFGWGIGS</sequence>
<name>4HYPE_BURCJ</name>
<evidence type="ECO:0000250" key="1">
    <source>
        <dbReference type="UniProtKB" id="Q4KGU2"/>
    </source>
</evidence>
<evidence type="ECO:0000269" key="2">
    <source>
    </source>
</evidence>
<evidence type="ECO:0000303" key="3">
    <source>
    </source>
</evidence>
<evidence type="ECO:0000305" key="4"/>
<evidence type="ECO:0000312" key="5">
    <source>
        <dbReference type="EMBL" id="CAR55122.1"/>
    </source>
</evidence>
<keyword id="KW-0413">Isomerase</keyword>
<organism>
    <name type="scientific">Burkholderia cenocepacia (strain ATCC BAA-245 / DSM 16553 / LMG 16656 / NCTC 13227 / J2315 / CF5610)</name>
    <name type="common">Burkholderia cepacia (strain J2315)</name>
    <dbReference type="NCBI Taxonomy" id="216591"/>
    <lineage>
        <taxon>Bacteria</taxon>
        <taxon>Pseudomonadati</taxon>
        <taxon>Pseudomonadota</taxon>
        <taxon>Betaproteobacteria</taxon>
        <taxon>Burkholderiales</taxon>
        <taxon>Burkholderiaceae</taxon>
        <taxon>Burkholderia</taxon>
        <taxon>Burkholderia cepacia complex</taxon>
    </lineage>
</organism>